<evidence type="ECO:0000255" key="1">
    <source>
        <dbReference type="HAMAP-Rule" id="MF_00048"/>
    </source>
</evidence>
<feature type="chain" id="PRO_0000336174" description="UPF0102 protein ELI_05985">
    <location>
        <begin position="1"/>
        <end position="116"/>
    </location>
</feature>
<dbReference type="EMBL" id="CP000157">
    <property type="protein sequence ID" value="ABC63289.1"/>
    <property type="molecule type" value="Genomic_DNA"/>
</dbReference>
<dbReference type="RefSeq" id="WP_011414125.1">
    <property type="nucleotide sequence ID" value="NC_007722.1"/>
</dbReference>
<dbReference type="SMR" id="Q2NAK2"/>
<dbReference type="STRING" id="314225.ELI_05985"/>
<dbReference type="KEGG" id="eli:ELI_05985"/>
<dbReference type="eggNOG" id="COG0792">
    <property type="taxonomic scope" value="Bacteria"/>
</dbReference>
<dbReference type="HOGENOM" id="CLU_115353_0_2_5"/>
<dbReference type="OrthoDB" id="9812968at2"/>
<dbReference type="Proteomes" id="UP000008808">
    <property type="component" value="Chromosome"/>
</dbReference>
<dbReference type="GO" id="GO:0003676">
    <property type="term" value="F:nucleic acid binding"/>
    <property type="evidence" value="ECO:0007669"/>
    <property type="project" value="InterPro"/>
</dbReference>
<dbReference type="Gene3D" id="3.40.1350.10">
    <property type="match status" value="1"/>
</dbReference>
<dbReference type="HAMAP" id="MF_00048">
    <property type="entry name" value="UPF0102"/>
    <property type="match status" value="1"/>
</dbReference>
<dbReference type="InterPro" id="IPR011335">
    <property type="entry name" value="Restrct_endonuc-II-like"/>
</dbReference>
<dbReference type="InterPro" id="IPR011856">
    <property type="entry name" value="tRNA_endonuc-like_dom_sf"/>
</dbReference>
<dbReference type="InterPro" id="IPR003509">
    <property type="entry name" value="UPF0102_YraN-like"/>
</dbReference>
<dbReference type="PANTHER" id="PTHR34039">
    <property type="entry name" value="UPF0102 PROTEIN YRAN"/>
    <property type="match status" value="1"/>
</dbReference>
<dbReference type="PANTHER" id="PTHR34039:SF1">
    <property type="entry name" value="UPF0102 PROTEIN YRAN"/>
    <property type="match status" value="1"/>
</dbReference>
<dbReference type="Pfam" id="PF02021">
    <property type="entry name" value="UPF0102"/>
    <property type="match status" value="1"/>
</dbReference>
<dbReference type="SUPFAM" id="SSF52980">
    <property type="entry name" value="Restriction endonuclease-like"/>
    <property type="match status" value="1"/>
</dbReference>
<keyword id="KW-1185">Reference proteome</keyword>
<reference key="1">
    <citation type="journal article" date="2009" name="J. Bacteriol.">
        <title>Complete genome sequence of Erythrobacter litoralis HTCC2594.</title>
        <authorList>
            <person name="Oh H.M."/>
            <person name="Giovannoni S.J."/>
            <person name="Ferriera S."/>
            <person name="Johnson J."/>
            <person name="Cho J.C."/>
        </authorList>
    </citation>
    <scope>NUCLEOTIDE SEQUENCE [LARGE SCALE GENOMIC DNA]</scope>
    <source>
        <strain>HTCC2594</strain>
    </source>
</reference>
<protein>
    <recommendedName>
        <fullName evidence="1">UPF0102 protein ELI_05985</fullName>
    </recommendedName>
</protein>
<gene>
    <name type="ordered locus">ELI_05985</name>
</gene>
<organism>
    <name type="scientific">Erythrobacter litoralis (strain HTCC2594)</name>
    <dbReference type="NCBI Taxonomy" id="314225"/>
    <lineage>
        <taxon>Bacteria</taxon>
        <taxon>Pseudomonadati</taxon>
        <taxon>Pseudomonadota</taxon>
        <taxon>Alphaproteobacteria</taxon>
        <taxon>Sphingomonadales</taxon>
        <taxon>Erythrobacteraceae</taxon>
        <taxon>Erythrobacter/Porphyrobacter group</taxon>
        <taxon>Erythrobacter</taxon>
    </lineage>
</organism>
<name>Y5985_ERYLH</name>
<comment type="similarity">
    <text evidence="1">Belongs to the UPF0102 family.</text>
</comment>
<sequence length="116" mass="13216">MKRQIAERSGRDGERRAALWLRAKGWSILAQRVKTPRGEIDLVAKRGKLVAFVEVKWRKTRAELDHAIDEYRLSRVAAAAEAIAHDYAQDGEDYRIDVILLAPGSFPRHIANAWQP</sequence>
<proteinExistence type="inferred from homology"/>
<accession>Q2NAK2</accession>